<reference key="1">
    <citation type="journal article" date="1994" name="Biochim. Biophys. Acta">
        <title>Cloning and sequencing of an Na+/H+ antiporter gene from the marine bacterium Vibrio alginolyticus.</title>
        <authorList>
            <person name="Nakamura T."/>
            <person name="Komano Y."/>
            <person name="Itaya E."/>
            <person name="Tsukamoto K."/>
            <person name="Tsuchiya T."/>
            <person name="Umemoto T."/>
        </authorList>
    </citation>
    <scope>NUCLEOTIDE SEQUENCE [GENOMIC DNA]</scope>
    <source>
        <strain>138-2</strain>
    </source>
</reference>
<feature type="chain" id="PRO_0000334455" description="Na(+)/H(+) antiporter NhaA">
    <location>
        <begin position="1"/>
        <end position="383"/>
    </location>
</feature>
<feature type="transmembrane region" description="Helical" evidence="1">
    <location>
        <begin position="14"/>
        <end position="34"/>
    </location>
</feature>
<feature type="transmembrane region" description="Helical" evidence="1">
    <location>
        <begin position="47"/>
        <end position="67"/>
    </location>
</feature>
<feature type="transmembrane region" description="Helical" evidence="1">
    <location>
        <begin position="87"/>
        <end position="107"/>
    </location>
</feature>
<feature type="transmembrane region" description="Helical" evidence="1">
    <location>
        <begin position="117"/>
        <end position="137"/>
    </location>
</feature>
<feature type="transmembrane region" description="Helical" evidence="1">
    <location>
        <begin position="146"/>
        <end position="166"/>
    </location>
</feature>
<feature type="transmembrane region" description="Helical" evidence="1">
    <location>
        <begin position="171"/>
        <end position="191"/>
    </location>
</feature>
<feature type="transmembrane region" description="Helical" evidence="1">
    <location>
        <begin position="205"/>
        <end position="225"/>
    </location>
</feature>
<feature type="transmembrane region" description="Helical" evidence="1">
    <location>
        <begin position="252"/>
        <end position="272"/>
    </location>
</feature>
<feature type="transmembrane region" description="Helical" evidence="1">
    <location>
        <begin position="280"/>
        <end position="300"/>
    </location>
</feature>
<feature type="transmembrane region" description="Helical" evidence="1">
    <location>
        <begin position="321"/>
        <end position="341"/>
    </location>
</feature>
<feature type="transmembrane region" description="Helical" evidence="1">
    <location>
        <begin position="356"/>
        <end position="376"/>
    </location>
</feature>
<protein>
    <recommendedName>
        <fullName evidence="1">Na(+)/H(+) antiporter NhaA</fullName>
    </recommendedName>
    <alternativeName>
        <fullName evidence="1">Sodium/proton antiporter NhaA</fullName>
    </alternativeName>
</protein>
<evidence type="ECO:0000255" key="1">
    <source>
        <dbReference type="HAMAP-Rule" id="MF_01844"/>
    </source>
</evidence>
<organism>
    <name type="scientific">Vibrio alginolyticus</name>
    <dbReference type="NCBI Taxonomy" id="663"/>
    <lineage>
        <taxon>Bacteria</taxon>
        <taxon>Pseudomonadati</taxon>
        <taxon>Pseudomonadota</taxon>
        <taxon>Gammaproteobacteria</taxon>
        <taxon>Vibrionales</taxon>
        <taxon>Vibrionaceae</taxon>
        <taxon>Vibrio</taxon>
    </lineage>
</organism>
<sequence length="383" mass="40403">MNDVIRDFFKMESAGGILLVIAAAIAMTIANSPLGETYQSVLHTYVFGMSVSHWINDGLMAVFFLLIGLEVKRELLEGALKSKETAIFPAIAAVGGMLAPALIYVAFNANDPEAISGWAIPAATDIAFALGIIALLGKRVPVSLKVFLLALAIIDDLGVVVIIALFYTGDLSTMALLVGFIMTGVLFMLNAKEVTKLTPYMIVGAILWFAVLKSGVHATLAGVVIGFAIPLKGKQGEHSPLKHMEHALHPYVAFGILPLFAFANAGISLEGVSMSGLTSMLPLGIALGLLVGKPLGIFTFSWAAVKMGVAKLPEGVNFKHIFAVSVLCGIGFTMSIFISSLAFGNVSPEFDTYARLGILMGSTTAALLGYALLHFSLPKKAQA</sequence>
<accession>Q56580</accession>
<proteinExistence type="inferred from homology"/>
<comment type="function">
    <text evidence="1">Na(+)/H(+) antiporter that extrudes sodium in exchange for external protons.</text>
</comment>
<comment type="catalytic activity">
    <reaction evidence="1">
        <text>Na(+)(in) + 2 H(+)(out) = Na(+)(out) + 2 H(+)(in)</text>
        <dbReference type="Rhea" id="RHEA:29251"/>
        <dbReference type="ChEBI" id="CHEBI:15378"/>
        <dbReference type="ChEBI" id="CHEBI:29101"/>
    </reaction>
    <physiologicalReaction direction="left-to-right" evidence="1">
        <dbReference type="Rhea" id="RHEA:29252"/>
    </physiologicalReaction>
</comment>
<comment type="subcellular location">
    <subcellularLocation>
        <location evidence="1">Cell inner membrane</location>
        <topology evidence="1">Multi-pass membrane protein</topology>
    </subcellularLocation>
</comment>
<comment type="similarity">
    <text evidence="1">Belongs to the NhaA Na(+)/H(+) (TC 2.A.33) antiporter family.</text>
</comment>
<name>NHAA_VIBAL</name>
<gene>
    <name evidence="1" type="primary">nhaA</name>
</gene>
<keyword id="KW-0050">Antiport</keyword>
<keyword id="KW-0997">Cell inner membrane</keyword>
<keyword id="KW-1003">Cell membrane</keyword>
<keyword id="KW-0406">Ion transport</keyword>
<keyword id="KW-0472">Membrane</keyword>
<keyword id="KW-0915">Sodium</keyword>
<keyword id="KW-0739">Sodium transport</keyword>
<keyword id="KW-0812">Transmembrane</keyword>
<keyword id="KW-1133">Transmembrane helix</keyword>
<keyword id="KW-0813">Transport</keyword>
<dbReference type="EMBL" id="D25214">
    <property type="protein sequence ID" value="BAA04944.1"/>
    <property type="molecule type" value="Genomic_DNA"/>
</dbReference>
<dbReference type="SMR" id="Q56580"/>
<dbReference type="STRING" id="663.BAU10_05445"/>
<dbReference type="eggNOG" id="COG3004">
    <property type="taxonomic scope" value="Bacteria"/>
</dbReference>
<dbReference type="GO" id="GO:0005886">
    <property type="term" value="C:plasma membrane"/>
    <property type="evidence" value="ECO:0007669"/>
    <property type="project" value="UniProtKB-SubCell"/>
</dbReference>
<dbReference type="GO" id="GO:0015385">
    <property type="term" value="F:sodium:proton antiporter activity"/>
    <property type="evidence" value="ECO:0007669"/>
    <property type="project" value="TreeGrafter"/>
</dbReference>
<dbReference type="GO" id="GO:0006885">
    <property type="term" value="P:regulation of pH"/>
    <property type="evidence" value="ECO:0007669"/>
    <property type="project" value="InterPro"/>
</dbReference>
<dbReference type="Gene3D" id="1.20.1530.10">
    <property type="entry name" value="Na+/H+ antiporter like domain"/>
    <property type="match status" value="1"/>
</dbReference>
<dbReference type="HAMAP" id="MF_01844">
    <property type="entry name" value="NhaA"/>
    <property type="match status" value="1"/>
</dbReference>
<dbReference type="InterPro" id="IPR023171">
    <property type="entry name" value="Na/H_antiporter_dom_sf"/>
</dbReference>
<dbReference type="InterPro" id="IPR004670">
    <property type="entry name" value="NhaA"/>
</dbReference>
<dbReference type="NCBIfam" id="TIGR00773">
    <property type="entry name" value="NhaA"/>
    <property type="match status" value="1"/>
</dbReference>
<dbReference type="NCBIfam" id="NF007111">
    <property type="entry name" value="PRK09560.1"/>
    <property type="match status" value="1"/>
</dbReference>
<dbReference type="NCBIfam" id="NF007112">
    <property type="entry name" value="PRK09561.1"/>
    <property type="match status" value="1"/>
</dbReference>
<dbReference type="PANTHER" id="PTHR30341:SF0">
    <property type="entry name" value="NA(+)_H(+) ANTIPORTER NHAA"/>
    <property type="match status" value="1"/>
</dbReference>
<dbReference type="PANTHER" id="PTHR30341">
    <property type="entry name" value="SODIUM ION/PROTON ANTIPORTER NHAA-RELATED"/>
    <property type="match status" value="1"/>
</dbReference>
<dbReference type="Pfam" id="PF06965">
    <property type="entry name" value="Na_H_antiport_1"/>
    <property type="match status" value="1"/>
</dbReference>